<comment type="function">
    <text>Core component of nucleosome. Nucleosomes wrap and compact DNA into chromatin, limiting DNA accessibility to the cellular machineries which require DNA as a template. Histones thereby play a central role in transcription regulation, DNA repair, DNA replication and chromosomal stability. DNA accessibility is regulated via a complex set of post-translational modifications of histones, also called histone code, and nucleosome remodeling.</text>
</comment>
<comment type="subunit">
    <text>The nucleosome is a histone octamer containing two molecules each of H2A, H2B, H3 and H4 assembled in one H3-H4 heterotetramer and two H2A-H2B heterodimers. The octamer wraps approximately 147 bp of DNA.</text>
</comment>
<comment type="subcellular location">
    <subcellularLocation>
        <location evidence="1">Nucleus</location>
    </subcellularLocation>
    <subcellularLocation>
        <location evidence="1">Chromosome</location>
    </subcellularLocation>
</comment>
<comment type="PTM">
    <text evidence="2">Glutarylation at Lys-94 (H4K91glu) destabilizes nucleosomes by promoting dissociation of the H2A-H2B dimers from nucleosomes.</text>
</comment>
<comment type="similarity">
    <text evidence="5">Belongs to the histone H4 family.</text>
</comment>
<protein>
    <recommendedName>
        <fullName>Histone H4</fullName>
    </recommendedName>
</protein>
<sequence>MNTQSIGAKGKSKAAKGIAKRHRKQSSLSDSISKPAIRRIARRAGVRRVGGGCFKEINNAAREYIRDTLSIACIYATHAKRKTITCSDILHSLKRMGIKYIGY</sequence>
<accession>Q8SQP4</accession>
<proteinExistence type="inferred from homology"/>
<reference key="1">
    <citation type="journal article" date="2001" name="Nature">
        <title>Genome sequence and gene compaction of the eukaryote parasite Encephalitozoon cuniculi.</title>
        <authorList>
            <person name="Katinka M.D."/>
            <person name="Duprat S."/>
            <person name="Cornillot E."/>
            <person name="Metenier G."/>
            <person name="Thomarat F."/>
            <person name="Prensier G."/>
            <person name="Barbe V."/>
            <person name="Peyretaillade E."/>
            <person name="Brottier P."/>
            <person name="Wincker P."/>
            <person name="Delbac F."/>
            <person name="El Alaoui H."/>
            <person name="Peyret P."/>
            <person name="Saurin W."/>
            <person name="Gouy M."/>
            <person name="Weissenbach J."/>
            <person name="Vivares C.P."/>
        </authorList>
    </citation>
    <scope>NUCLEOTIDE SEQUENCE [LARGE SCALE GENOMIC DNA]</scope>
    <source>
        <strain>GB-M1</strain>
    </source>
</reference>
<gene>
    <name type="primary">HHF1</name>
    <name type="ordered locus">ECU09_0440</name>
</gene>
<organism>
    <name type="scientific">Encephalitozoon cuniculi (strain GB-M1)</name>
    <name type="common">Microsporidian parasite</name>
    <dbReference type="NCBI Taxonomy" id="284813"/>
    <lineage>
        <taxon>Eukaryota</taxon>
        <taxon>Fungi</taxon>
        <taxon>Fungi incertae sedis</taxon>
        <taxon>Microsporidia</taxon>
        <taxon>Unikaryonidae</taxon>
        <taxon>Encephalitozoon</taxon>
    </lineage>
</organism>
<dbReference type="EMBL" id="AL590451">
    <property type="protein sequence ID" value="CAD27016.1"/>
    <property type="molecule type" value="Genomic_DNA"/>
</dbReference>
<dbReference type="RefSeq" id="XP_955597.1">
    <property type="nucleotide sequence ID" value="XM_950504.1"/>
</dbReference>
<dbReference type="SMR" id="Q8SQP4"/>
<dbReference type="FunCoup" id="Q8SQP4">
    <property type="interactions" value="150"/>
</dbReference>
<dbReference type="STRING" id="284813.Q8SQP4"/>
<dbReference type="VEuPathDB" id="MicrosporidiaDB:ECU09_0440"/>
<dbReference type="HOGENOM" id="CLU_109117_2_3_1"/>
<dbReference type="InParanoid" id="Q8SQP4"/>
<dbReference type="OMA" id="QKEHING"/>
<dbReference type="OrthoDB" id="2532770at2759"/>
<dbReference type="Proteomes" id="UP000000819">
    <property type="component" value="Chromosome IX"/>
</dbReference>
<dbReference type="GO" id="GO:0000786">
    <property type="term" value="C:nucleosome"/>
    <property type="evidence" value="ECO:0007669"/>
    <property type="project" value="UniProtKB-KW"/>
</dbReference>
<dbReference type="GO" id="GO:0005634">
    <property type="term" value="C:nucleus"/>
    <property type="evidence" value="ECO:0007669"/>
    <property type="project" value="UniProtKB-SubCell"/>
</dbReference>
<dbReference type="GO" id="GO:0003677">
    <property type="term" value="F:DNA binding"/>
    <property type="evidence" value="ECO:0007669"/>
    <property type="project" value="UniProtKB-KW"/>
</dbReference>
<dbReference type="GO" id="GO:0046982">
    <property type="term" value="F:protein heterodimerization activity"/>
    <property type="evidence" value="ECO:0007669"/>
    <property type="project" value="InterPro"/>
</dbReference>
<dbReference type="GO" id="GO:0030527">
    <property type="term" value="F:structural constituent of chromatin"/>
    <property type="evidence" value="ECO:0007669"/>
    <property type="project" value="InterPro"/>
</dbReference>
<dbReference type="CDD" id="cd22912">
    <property type="entry name" value="HFD_H4"/>
    <property type="match status" value="1"/>
</dbReference>
<dbReference type="Gene3D" id="1.10.20.10">
    <property type="entry name" value="Histone, subunit A"/>
    <property type="match status" value="1"/>
</dbReference>
<dbReference type="InterPro" id="IPR003958">
    <property type="entry name" value="CBFA_NFYB_domain"/>
</dbReference>
<dbReference type="InterPro" id="IPR009072">
    <property type="entry name" value="Histone-fold"/>
</dbReference>
<dbReference type="InterPro" id="IPR001951">
    <property type="entry name" value="Histone_H4"/>
</dbReference>
<dbReference type="PANTHER" id="PTHR10484">
    <property type="entry name" value="HISTONE H4"/>
    <property type="match status" value="1"/>
</dbReference>
<dbReference type="Pfam" id="PF00808">
    <property type="entry name" value="CBFD_NFYB_HMF"/>
    <property type="match status" value="1"/>
</dbReference>
<dbReference type="PRINTS" id="PR00623">
    <property type="entry name" value="HISTONEH4"/>
</dbReference>
<dbReference type="SUPFAM" id="SSF47113">
    <property type="entry name" value="Histone-fold"/>
    <property type="match status" value="1"/>
</dbReference>
<evidence type="ECO:0000250" key="1"/>
<evidence type="ECO:0000250" key="2">
    <source>
        <dbReference type="UniProtKB" id="P02309"/>
    </source>
</evidence>
<evidence type="ECO:0000250" key="3">
    <source>
        <dbReference type="UniProtKB" id="P62805"/>
    </source>
</evidence>
<evidence type="ECO:0000256" key="4">
    <source>
        <dbReference type="SAM" id="MobiDB-lite"/>
    </source>
</evidence>
<evidence type="ECO:0000305" key="5"/>
<keyword id="KW-0007">Acetylation</keyword>
<keyword id="KW-0158">Chromosome</keyword>
<keyword id="KW-0238">DNA-binding</keyword>
<keyword id="KW-0488">Methylation</keyword>
<keyword id="KW-0544">Nucleosome core</keyword>
<keyword id="KW-0539">Nucleus</keyword>
<keyword id="KW-1185">Reference proteome</keyword>
<feature type="chain" id="PRO_0000158314" description="Histone H4">
    <location>
        <begin position="1"/>
        <end position="103"/>
    </location>
</feature>
<feature type="DNA-binding region">
    <location>
        <begin position="20"/>
        <end position="24"/>
    </location>
</feature>
<feature type="region of interest" description="Disordered" evidence="4">
    <location>
        <begin position="1"/>
        <end position="32"/>
    </location>
</feature>
<feature type="compositionally biased region" description="Basic residues" evidence="4">
    <location>
        <begin position="10"/>
        <end position="25"/>
    </location>
</feature>
<feature type="modified residue" description="N6-acetyl-N6-methyllysine; alternate" evidence="3">
    <location>
        <position position="16"/>
    </location>
</feature>
<feature type="modified residue" description="N6-methyllysine; alternate" evidence="2">
    <location>
        <position position="16"/>
    </location>
</feature>
<feature type="modified residue" description="N6-glutaryllysine" evidence="2">
    <location>
        <position position="94"/>
    </location>
</feature>
<name>H4_ENCCU</name>